<gene>
    <name type="primary">DBP7</name>
    <name type="ordered locus">YKR024C</name>
</gene>
<reference key="1">
    <citation type="journal article" date="1994" name="Nature">
        <title>Complete DNA sequence of yeast chromosome XI.</title>
        <authorList>
            <person name="Dujon B."/>
            <person name="Alexandraki D."/>
            <person name="Andre B."/>
            <person name="Ansorge W."/>
            <person name="Baladron V."/>
            <person name="Ballesta J.P.G."/>
            <person name="Banrevi A."/>
            <person name="Bolle P.-A."/>
            <person name="Bolotin-Fukuhara M."/>
            <person name="Bossier P."/>
            <person name="Bou G."/>
            <person name="Boyer J."/>
            <person name="Buitrago M.J."/>
            <person name="Cheret G."/>
            <person name="Colleaux L."/>
            <person name="Daignan-Fornier B."/>
            <person name="del Rey F."/>
            <person name="Dion C."/>
            <person name="Domdey H."/>
            <person name="Duesterhoeft A."/>
            <person name="Duesterhus S."/>
            <person name="Entian K.-D."/>
            <person name="Erfle H."/>
            <person name="Esteban P.F."/>
            <person name="Feldmann H."/>
            <person name="Fernandes L."/>
            <person name="Fobo G.M."/>
            <person name="Fritz C."/>
            <person name="Fukuhara H."/>
            <person name="Gabel C."/>
            <person name="Gaillon L."/>
            <person name="Garcia-Cantalejo J.M."/>
            <person name="Garcia-Ramirez J.J."/>
            <person name="Gent M.E."/>
            <person name="Ghazvini M."/>
            <person name="Goffeau A."/>
            <person name="Gonzalez A."/>
            <person name="Grothues D."/>
            <person name="Guerreiro P."/>
            <person name="Hegemann J.H."/>
            <person name="Hewitt N."/>
            <person name="Hilger F."/>
            <person name="Hollenberg C.P."/>
            <person name="Horaitis O."/>
            <person name="Indge K.J."/>
            <person name="Jacquier A."/>
            <person name="James C.M."/>
            <person name="Jauniaux J.-C."/>
            <person name="Jimenez A."/>
            <person name="Keuchel H."/>
            <person name="Kirchrath L."/>
            <person name="Kleine K."/>
            <person name="Koetter P."/>
            <person name="Legrain P."/>
            <person name="Liebl S."/>
            <person name="Louis E.J."/>
            <person name="Maia e Silva A."/>
            <person name="Marck C."/>
            <person name="Monnier A.-L."/>
            <person name="Moestl D."/>
            <person name="Mueller S."/>
            <person name="Obermaier B."/>
            <person name="Oliver S.G."/>
            <person name="Pallier C."/>
            <person name="Pascolo S."/>
            <person name="Pfeiffer F."/>
            <person name="Philippsen P."/>
            <person name="Planta R.J."/>
            <person name="Pohl F.M."/>
            <person name="Pohl T.M."/>
            <person name="Poehlmann R."/>
            <person name="Portetelle D."/>
            <person name="Purnelle B."/>
            <person name="Puzos V."/>
            <person name="Ramezani Rad M."/>
            <person name="Rasmussen S.W."/>
            <person name="Remacha M.A."/>
            <person name="Revuelta J.L."/>
            <person name="Richard G.-F."/>
            <person name="Rieger M."/>
            <person name="Rodrigues-Pousada C."/>
            <person name="Rose M."/>
            <person name="Rupp T."/>
            <person name="Santos M.A."/>
            <person name="Schwager C."/>
            <person name="Sensen C."/>
            <person name="Skala J."/>
            <person name="Soares H."/>
            <person name="Sor F."/>
            <person name="Stegemann J."/>
            <person name="Tettelin H."/>
            <person name="Thierry A."/>
            <person name="Tzermia M."/>
            <person name="Urrestarazu L.A."/>
            <person name="van Dyck L."/>
            <person name="van Vliet-Reedijk J.C."/>
            <person name="Valens M."/>
            <person name="Vandenbol M."/>
            <person name="Vilela C."/>
            <person name="Vissers S."/>
            <person name="von Wettstein D."/>
            <person name="Voss H."/>
            <person name="Wiemann S."/>
            <person name="Xu G."/>
            <person name="Zimmermann J."/>
            <person name="Haasemann M."/>
            <person name="Becker I."/>
            <person name="Mewes H.-W."/>
        </authorList>
    </citation>
    <scope>NUCLEOTIDE SEQUENCE [LARGE SCALE GENOMIC DNA]</scope>
    <source>
        <strain>ATCC 204508 / S288c</strain>
    </source>
</reference>
<reference key="2">
    <citation type="journal article" date="2014" name="G3 (Bethesda)">
        <title>The reference genome sequence of Saccharomyces cerevisiae: Then and now.</title>
        <authorList>
            <person name="Engel S.R."/>
            <person name="Dietrich F.S."/>
            <person name="Fisk D.G."/>
            <person name="Binkley G."/>
            <person name="Balakrishnan R."/>
            <person name="Costanzo M.C."/>
            <person name="Dwight S.S."/>
            <person name="Hitz B.C."/>
            <person name="Karra K."/>
            <person name="Nash R.S."/>
            <person name="Weng S."/>
            <person name="Wong E.D."/>
            <person name="Lloyd P."/>
            <person name="Skrzypek M.S."/>
            <person name="Miyasato S.R."/>
            <person name="Simison M."/>
            <person name="Cherry J.M."/>
        </authorList>
    </citation>
    <scope>GENOME REANNOTATION</scope>
    <source>
        <strain>ATCC 204508 / S288c</strain>
    </source>
</reference>
<reference key="3">
    <citation type="journal article" date="1998" name="RNA">
        <title>Dbp7p, a putative ATP-dependent RNA helicase from Saccharomyces cerevisiae, is required for 60S ribosomal subunit assembly.</title>
        <authorList>
            <person name="Daugeron M.-C."/>
            <person name="Linder P."/>
        </authorList>
    </citation>
    <scope>FUNCTION</scope>
    <scope>SUBCELLULAR LOCATION</scope>
</reference>
<reference key="4">
    <citation type="journal article" date="2003" name="Nature">
        <title>Global analysis of protein localization in budding yeast.</title>
        <authorList>
            <person name="Huh W.-K."/>
            <person name="Falvo J.V."/>
            <person name="Gerke L.C."/>
            <person name="Carroll A.S."/>
            <person name="Howson R.W."/>
            <person name="Weissman J.S."/>
            <person name="O'Shea E.K."/>
        </authorList>
    </citation>
    <scope>SUBCELLULAR LOCATION [LARGE SCALE ANALYSIS]</scope>
</reference>
<reference key="5">
    <citation type="journal article" date="2003" name="Nature">
        <title>Global analysis of protein expression in yeast.</title>
        <authorList>
            <person name="Ghaemmaghami S."/>
            <person name="Huh W.-K."/>
            <person name="Bower K."/>
            <person name="Howson R.W."/>
            <person name="Belle A."/>
            <person name="Dephoure N."/>
            <person name="O'Shea E.K."/>
            <person name="Weissman J.S."/>
        </authorList>
    </citation>
    <scope>LEVEL OF PROTEIN EXPRESSION [LARGE SCALE ANALYSIS]</scope>
</reference>
<reference key="6">
    <citation type="journal article" date="2008" name="Mol. Cell. Proteomics">
        <title>A multidimensional chromatography technology for in-depth phosphoproteome analysis.</title>
        <authorList>
            <person name="Albuquerque C.P."/>
            <person name="Smolka M.B."/>
            <person name="Payne S.H."/>
            <person name="Bafna V."/>
            <person name="Eng J."/>
            <person name="Zhou H."/>
        </authorList>
    </citation>
    <scope>IDENTIFICATION BY MASS SPECTROMETRY [LARGE SCALE ANALYSIS]</scope>
</reference>
<accession>P36120</accession>
<accession>D6VX89</accession>
<proteinExistence type="evidence at protein level"/>
<protein>
    <recommendedName>
        <fullName>ATP-dependent RNA helicase DBP7</fullName>
        <ecNumber>3.6.4.13</ecNumber>
    </recommendedName>
    <alternativeName>
        <fullName>DEAD box protein 7</fullName>
    </alternativeName>
</protein>
<name>DBP7_YEAST</name>
<organism>
    <name type="scientific">Saccharomyces cerevisiae (strain ATCC 204508 / S288c)</name>
    <name type="common">Baker's yeast</name>
    <dbReference type="NCBI Taxonomy" id="559292"/>
    <lineage>
        <taxon>Eukaryota</taxon>
        <taxon>Fungi</taxon>
        <taxon>Dikarya</taxon>
        <taxon>Ascomycota</taxon>
        <taxon>Saccharomycotina</taxon>
        <taxon>Saccharomycetes</taxon>
        <taxon>Saccharomycetales</taxon>
        <taxon>Saccharomycetaceae</taxon>
        <taxon>Saccharomyces</taxon>
    </lineage>
</organism>
<dbReference type="EC" id="3.6.4.13"/>
<dbReference type="EMBL" id="Z28249">
    <property type="protein sequence ID" value="CAA82096.1"/>
    <property type="molecule type" value="Genomic_DNA"/>
</dbReference>
<dbReference type="EMBL" id="BK006944">
    <property type="protein sequence ID" value="DAA09179.1"/>
    <property type="molecule type" value="Genomic_DNA"/>
</dbReference>
<dbReference type="PIR" id="S38093">
    <property type="entry name" value="S38093"/>
</dbReference>
<dbReference type="RefSeq" id="NP_012949.1">
    <property type="nucleotide sequence ID" value="NM_001179814.1"/>
</dbReference>
<dbReference type="SMR" id="P36120"/>
<dbReference type="BioGRID" id="34156">
    <property type="interactions" value="545"/>
</dbReference>
<dbReference type="DIP" id="DIP-1833N"/>
<dbReference type="FunCoup" id="P36120">
    <property type="interactions" value="928"/>
</dbReference>
<dbReference type="IntAct" id="P36120">
    <property type="interactions" value="28"/>
</dbReference>
<dbReference type="MINT" id="P36120"/>
<dbReference type="STRING" id="4932.YKR024C"/>
<dbReference type="GlyGen" id="P36120">
    <property type="glycosylation" value="1 site, 1 O-linked glycan (1 site)"/>
</dbReference>
<dbReference type="iPTMnet" id="P36120"/>
<dbReference type="PaxDb" id="4932-YKR024C"/>
<dbReference type="PeptideAtlas" id="P36120"/>
<dbReference type="EnsemblFungi" id="YKR024C_mRNA">
    <property type="protein sequence ID" value="YKR024C"/>
    <property type="gene ID" value="YKR024C"/>
</dbReference>
<dbReference type="GeneID" id="853894"/>
<dbReference type="KEGG" id="sce:YKR024C"/>
<dbReference type="AGR" id="SGD:S000001732"/>
<dbReference type="SGD" id="S000001732">
    <property type="gene designation" value="DBP7"/>
</dbReference>
<dbReference type="VEuPathDB" id="FungiDB:YKR024C"/>
<dbReference type="eggNOG" id="KOG0348">
    <property type="taxonomic scope" value="Eukaryota"/>
</dbReference>
<dbReference type="GeneTree" id="ENSGT00550000075041"/>
<dbReference type="HOGENOM" id="CLU_003041_26_2_1"/>
<dbReference type="InParanoid" id="P36120"/>
<dbReference type="OMA" id="AVHIKAD"/>
<dbReference type="OrthoDB" id="422663at2759"/>
<dbReference type="BioCyc" id="YEAST:G3O-32000-MONOMER"/>
<dbReference type="BioGRID-ORCS" id="853894">
    <property type="hits" value="4 hits in 10 CRISPR screens"/>
</dbReference>
<dbReference type="PRO" id="PR:P36120"/>
<dbReference type="Proteomes" id="UP000002311">
    <property type="component" value="Chromosome XI"/>
</dbReference>
<dbReference type="RNAct" id="P36120">
    <property type="molecule type" value="protein"/>
</dbReference>
<dbReference type="GO" id="GO:0005730">
    <property type="term" value="C:nucleolus"/>
    <property type="evidence" value="ECO:0000314"/>
    <property type="project" value="SGD"/>
</dbReference>
<dbReference type="GO" id="GO:0005634">
    <property type="term" value="C:nucleus"/>
    <property type="evidence" value="ECO:0000318"/>
    <property type="project" value="GO_Central"/>
</dbReference>
<dbReference type="GO" id="GO:0005524">
    <property type="term" value="F:ATP binding"/>
    <property type="evidence" value="ECO:0007669"/>
    <property type="project" value="UniProtKB-KW"/>
</dbReference>
<dbReference type="GO" id="GO:0016887">
    <property type="term" value="F:ATP hydrolysis activity"/>
    <property type="evidence" value="ECO:0007669"/>
    <property type="project" value="RHEA"/>
</dbReference>
<dbReference type="GO" id="GO:0003723">
    <property type="term" value="F:RNA binding"/>
    <property type="evidence" value="ECO:0007669"/>
    <property type="project" value="UniProtKB-KW"/>
</dbReference>
<dbReference type="GO" id="GO:0003724">
    <property type="term" value="F:RNA helicase activity"/>
    <property type="evidence" value="ECO:0000250"/>
    <property type="project" value="SGD"/>
</dbReference>
<dbReference type="GO" id="GO:0000464">
    <property type="term" value="P:endonucleolytic cleavage in ITS1 upstream of 5.8S rRNA from tricistronic rRNA transcript (SSU-rRNA, 5.8S rRNA, LSU-rRNA)"/>
    <property type="evidence" value="ECO:0000315"/>
    <property type="project" value="SGD"/>
</dbReference>
<dbReference type="GO" id="GO:0000463">
    <property type="term" value="P:maturation of LSU-rRNA from tricistronic rRNA transcript (SSU-rRNA, 5.8S rRNA, LSU-rRNA)"/>
    <property type="evidence" value="ECO:0000315"/>
    <property type="project" value="SGD"/>
</dbReference>
<dbReference type="GO" id="GO:0042254">
    <property type="term" value="P:ribosome biogenesis"/>
    <property type="evidence" value="ECO:0000318"/>
    <property type="project" value="GO_Central"/>
</dbReference>
<dbReference type="CDD" id="cd17949">
    <property type="entry name" value="DEADc_DDX31"/>
    <property type="match status" value="1"/>
</dbReference>
<dbReference type="CDD" id="cd18787">
    <property type="entry name" value="SF2_C_DEAD"/>
    <property type="match status" value="1"/>
</dbReference>
<dbReference type="FunFam" id="3.40.50.300:FF:002326">
    <property type="entry name" value="ATP-dependent RNA helicase DBP7"/>
    <property type="match status" value="1"/>
</dbReference>
<dbReference type="Gene3D" id="3.40.50.300">
    <property type="entry name" value="P-loop containing nucleotide triphosphate hydrolases"/>
    <property type="match status" value="2"/>
</dbReference>
<dbReference type="InterPro" id="IPR011545">
    <property type="entry name" value="DEAD/DEAH_box_helicase_dom"/>
</dbReference>
<dbReference type="InterPro" id="IPR014001">
    <property type="entry name" value="Helicase_ATP-bd"/>
</dbReference>
<dbReference type="InterPro" id="IPR001650">
    <property type="entry name" value="Helicase_C-like"/>
</dbReference>
<dbReference type="InterPro" id="IPR027417">
    <property type="entry name" value="P-loop_NTPase"/>
</dbReference>
<dbReference type="InterPro" id="IPR014014">
    <property type="entry name" value="RNA_helicase_DEAD_Q_motif"/>
</dbReference>
<dbReference type="InterPro" id="IPR025313">
    <property type="entry name" value="SPB4-like_CTE"/>
</dbReference>
<dbReference type="PANTHER" id="PTHR24031">
    <property type="entry name" value="RNA HELICASE"/>
    <property type="match status" value="1"/>
</dbReference>
<dbReference type="Pfam" id="PF13959">
    <property type="entry name" value="CTE_SPB4"/>
    <property type="match status" value="1"/>
</dbReference>
<dbReference type="Pfam" id="PF00270">
    <property type="entry name" value="DEAD"/>
    <property type="match status" value="1"/>
</dbReference>
<dbReference type="Pfam" id="PF00271">
    <property type="entry name" value="Helicase_C"/>
    <property type="match status" value="1"/>
</dbReference>
<dbReference type="SMART" id="SM00487">
    <property type="entry name" value="DEXDc"/>
    <property type="match status" value="1"/>
</dbReference>
<dbReference type="SMART" id="SM01178">
    <property type="entry name" value="DUF4217"/>
    <property type="match status" value="1"/>
</dbReference>
<dbReference type="SMART" id="SM00490">
    <property type="entry name" value="HELICc"/>
    <property type="match status" value="1"/>
</dbReference>
<dbReference type="SUPFAM" id="SSF52540">
    <property type="entry name" value="P-loop containing nucleoside triphosphate hydrolases"/>
    <property type="match status" value="2"/>
</dbReference>
<dbReference type="PROSITE" id="PS51192">
    <property type="entry name" value="HELICASE_ATP_BIND_1"/>
    <property type="match status" value="1"/>
</dbReference>
<dbReference type="PROSITE" id="PS51194">
    <property type="entry name" value="HELICASE_CTER"/>
    <property type="match status" value="1"/>
</dbReference>
<dbReference type="PROSITE" id="PS51195">
    <property type="entry name" value="Q_MOTIF"/>
    <property type="match status" value="1"/>
</dbReference>
<comment type="function">
    <text evidence="6">ATP-binding RNA helicase involved in the biogenesis of 60S ribosomal subunits and is required for the normal formation of 25S and 5.8S rRNAs.</text>
</comment>
<comment type="catalytic activity">
    <reaction>
        <text>ATP + H2O = ADP + phosphate + H(+)</text>
        <dbReference type="Rhea" id="RHEA:13065"/>
        <dbReference type="ChEBI" id="CHEBI:15377"/>
        <dbReference type="ChEBI" id="CHEBI:15378"/>
        <dbReference type="ChEBI" id="CHEBI:30616"/>
        <dbReference type="ChEBI" id="CHEBI:43474"/>
        <dbReference type="ChEBI" id="CHEBI:456216"/>
        <dbReference type="EC" id="3.6.4.13"/>
    </reaction>
</comment>
<comment type="subcellular location">
    <subcellularLocation>
        <location evidence="4 6">Nucleus</location>
        <location evidence="4 6">Nucleolus</location>
    </subcellularLocation>
</comment>
<comment type="domain">
    <text>The Q motif is unique to and characteristic of the DEAD box family of RNA helicases and controls ATP binding and hydrolysis.</text>
</comment>
<comment type="miscellaneous">
    <text evidence="5">Present with 1460 molecules/cell in log phase SD medium.</text>
</comment>
<comment type="similarity">
    <text evidence="7">Belongs to the DEAD box helicase family. DDX31/DBP7 subfamily.</text>
</comment>
<sequence>MSDEDSMLLNFTTNEDTAGSSYKQAAKVTGGRWKDRRRMKMKLEGKTVSRKRKANTTGDEGIIPGRGENSIKKLHKESSYSSEEQEKYKGRNAHNTQGRTLPADSQFVSSLFTSNREITTAVNTNIHDENVAINPSNAPLKGDQFASLGVSSLLVSHLEQKMRIKKPTSIQKQAIPQIIGNAGKNDFFIHAQTGSGKTLSYLLPIISTILNMDTHVDRTSGAFALVIAPTRELASQIYHVCSTLVSCCHYLVPCLLIGGERKKSEKARLRKGCNFIIGTPGRVLDHLQNTKVIKEQLSQSLRYIVLDEGDKLMELGFDETISEIIKIVHDIPINSEKFPKLPHKLVHMLCSATLTDGVNRLRNVALKDYKLISNGTKKDSDIVTVAPDQLLQRITIVPPKLRLVTLAATLNNITKDFIASGQQSKTLRTIVFVSCSDSVEFHYDAFSGSDGHHKNLTGDSVRLLTKGNTMFPCFSDSRDPDVVIYKLHGSLSQQMRTSTLQHFARDNEATKGKHLIMFCTDVASRGLDLPHVGSVIELDPPFAVEDHLHRVGRTARAGEKGESLLFLLPGEEEKYMDYIQPYHPMGWELLKFDKEILMPAFKDVNVNRNDKFIRKDEKSSKNKDVGDKEYEWDTNATTWHLNIERRVVGDSAFKNLAVKGFISHVRAYATHISQEKKFFNVKFLHLGHLAKSFGLRERPKAMGLQSSKDGNSEKKPTKENSKNKMFRMARMAEKQIASEFNY</sequence>
<feature type="chain" id="PRO_0000055037" description="ATP-dependent RNA helicase DBP7">
    <location>
        <begin position="1"/>
        <end position="742"/>
    </location>
</feature>
<feature type="domain" description="Helicase ATP-binding" evidence="1">
    <location>
        <begin position="178"/>
        <end position="372"/>
    </location>
</feature>
<feature type="domain" description="Helicase C-terminal" evidence="2">
    <location>
        <begin position="405"/>
        <end position="605"/>
    </location>
</feature>
<feature type="region of interest" description="Disordered" evidence="3">
    <location>
        <begin position="45"/>
        <end position="100"/>
    </location>
</feature>
<feature type="region of interest" description="Disordered" evidence="3">
    <location>
        <begin position="701"/>
        <end position="726"/>
    </location>
</feature>
<feature type="short sequence motif" description="Q motif">
    <location>
        <begin position="143"/>
        <end position="172"/>
    </location>
</feature>
<feature type="short sequence motif" description="DEGD box">
    <location>
        <begin position="307"/>
        <end position="310"/>
    </location>
</feature>
<feature type="compositionally biased region" description="Basic and acidic residues" evidence="3">
    <location>
        <begin position="710"/>
        <end position="722"/>
    </location>
</feature>
<feature type="binding site" evidence="1">
    <location>
        <begin position="191"/>
        <end position="198"/>
    </location>
    <ligand>
        <name>ATP</name>
        <dbReference type="ChEBI" id="CHEBI:30616"/>
    </ligand>
</feature>
<keyword id="KW-0067">ATP-binding</keyword>
<keyword id="KW-0347">Helicase</keyword>
<keyword id="KW-0378">Hydrolase</keyword>
<keyword id="KW-0547">Nucleotide-binding</keyword>
<keyword id="KW-0539">Nucleus</keyword>
<keyword id="KW-1185">Reference proteome</keyword>
<keyword id="KW-0690">Ribosome biogenesis</keyword>
<keyword id="KW-0694">RNA-binding</keyword>
<keyword id="KW-0698">rRNA processing</keyword>
<evidence type="ECO:0000255" key="1">
    <source>
        <dbReference type="PROSITE-ProRule" id="PRU00541"/>
    </source>
</evidence>
<evidence type="ECO:0000255" key="2">
    <source>
        <dbReference type="PROSITE-ProRule" id="PRU00542"/>
    </source>
</evidence>
<evidence type="ECO:0000256" key="3">
    <source>
        <dbReference type="SAM" id="MobiDB-lite"/>
    </source>
</evidence>
<evidence type="ECO:0000269" key="4">
    <source>
    </source>
</evidence>
<evidence type="ECO:0000269" key="5">
    <source>
    </source>
</evidence>
<evidence type="ECO:0000269" key="6">
    <source>
    </source>
</evidence>
<evidence type="ECO:0000305" key="7"/>